<sequence>MPIIIDKDLPARKVLQEENIFTMTKERAEKQDIRALKIAILNLMPKKQETEAQLLRLLGNTPLQLDMHLLHMESHISRNVAQDHLTSFYKTFRDIEKERFDGLIITGAPIETLPFEDVDYWEELKKIMDYSKTNVTSTLHICWGAQAGLYYHYGIPKYPLAEKMFGVFEHEVLEQHVKLLQGFDELFFAPHSRHTEVHAADIEKVEDLKLLAISEEAGVYLVIGQNGKHIFVLGHSEYSCDTLKREYERDIQRGLNIAVPKNYFKYNNPDEKPLVRWRSHGNLLFSNWLNYYVYQETPYIL</sequence>
<organism>
    <name type="scientific">Bacillus cytotoxicus (strain DSM 22905 / CIP 110041 / 391-98 / NVH 391-98)</name>
    <dbReference type="NCBI Taxonomy" id="315749"/>
    <lineage>
        <taxon>Bacteria</taxon>
        <taxon>Bacillati</taxon>
        <taxon>Bacillota</taxon>
        <taxon>Bacilli</taxon>
        <taxon>Bacillales</taxon>
        <taxon>Bacillaceae</taxon>
        <taxon>Bacillus</taxon>
        <taxon>Bacillus cereus group</taxon>
    </lineage>
</organism>
<reference key="1">
    <citation type="journal article" date="2008" name="Chem. Biol. Interact.">
        <title>Extending the Bacillus cereus group genomics to putative food-borne pathogens of different toxicity.</title>
        <authorList>
            <person name="Lapidus A."/>
            <person name="Goltsman E."/>
            <person name="Auger S."/>
            <person name="Galleron N."/>
            <person name="Segurens B."/>
            <person name="Dossat C."/>
            <person name="Land M.L."/>
            <person name="Broussolle V."/>
            <person name="Brillard J."/>
            <person name="Guinebretiere M.-H."/>
            <person name="Sanchis V."/>
            <person name="Nguen-the C."/>
            <person name="Lereclus D."/>
            <person name="Richardson P."/>
            <person name="Wincker P."/>
            <person name="Weissenbach J."/>
            <person name="Ehrlich S.D."/>
            <person name="Sorokin A."/>
        </authorList>
    </citation>
    <scope>NUCLEOTIDE SEQUENCE [LARGE SCALE GENOMIC DNA]</scope>
    <source>
        <strain>DSM 22905 / CIP 110041 / 391-98 / NVH 391-98</strain>
    </source>
</reference>
<gene>
    <name evidence="1" type="primary">metAA</name>
    <name type="ordered locus">Bcer98_3924</name>
</gene>
<feature type="chain" id="PRO_1000078926" description="Homoserine O-acetyltransferase">
    <location>
        <begin position="1"/>
        <end position="301"/>
    </location>
</feature>
<feature type="active site" description="Acyl-thioester intermediate" evidence="1">
    <location>
        <position position="142"/>
    </location>
</feature>
<feature type="active site" description="Proton acceptor" evidence="1">
    <location>
        <position position="235"/>
    </location>
</feature>
<feature type="active site" evidence="1">
    <location>
        <position position="237"/>
    </location>
</feature>
<feature type="binding site" evidence="1">
    <location>
        <position position="163"/>
    </location>
    <ligand>
        <name>substrate</name>
    </ligand>
</feature>
<feature type="binding site" evidence="1">
    <location>
        <position position="192"/>
    </location>
    <ligand>
        <name>substrate</name>
    </ligand>
</feature>
<feature type="binding site" evidence="1">
    <location>
        <position position="249"/>
    </location>
    <ligand>
        <name>substrate</name>
    </ligand>
</feature>
<feature type="site" description="Important for acyl-CoA specificity" evidence="1">
    <location>
        <position position="111"/>
    </location>
</feature>
<feature type="site" description="Important for substrate specificity" evidence="1">
    <location>
        <position position="192"/>
    </location>
</feature>
<comment type="function">
    <text evidence="1">Transfers an acetyl group from acetyl-CoA to L-homoserine, forming acetyl-L-homoserine.</text>
</comment>
<comment type="catalytic activity">
    <reaction evidence="1">
        <text>L-homoserine + acetyl-CoA = O-acetyl-L-homoserine + CoA</text>
        <dbReference type="Rhea" id="RHEA:13701"/>
        <dbReference type="ChEBI" id="CHEBI:57287"/>
        <dbReference type="ChEBI" id="CHEBI:57288"/>
        <dbReference type="ChEBI" id="CHEBI:57476"/>
        <dbReference type="ChEBI" id="CHEBI:57716"/>
        <dbReference type="EC" id="2.3.1.31"/>
    </reaction>
</comment>
<comment type="pathway">
    <text evidence="1">Amino-acid biosynthesis; L-methionine biosynthesis via de novo pathway; O-acetyl-L-homoserine from L-homoserine: step 1/1.</text>
</comment>
<comment type="subcellular location">
    <subcellularLocation>
        <location evidence="1">Cytoplasm</location>
    </subcellularLocation>
</comment>
<comment type="similarity">
    <text evidence="1">Belongs to the MetA family.</text>
</comment>
<evidence type="ECO:0000255" key="1">
    <source>
        <dbReference type="HAMAP-Rule" id="MF_00295"/>
    </source>
</evidence>
<protein>
    <recommendedName>
        <fullName evidence="1">Homoserine O-acetyltransferase</fullName>
        <shortName evidence="1">HAT</shortName>
        <ecNumber evidence="1">2.3.1.31</ecNumber>
    </recommendedName>
    <alternativeName>
        <fullName evidence="1">Homoserine transacetylase</fullName>
        <shortName evidence="1">HTA</shortName>
    </alternativeName>
</protein>
<name>METAA_BACCN</name>
<dbReference type="EC" id="2.3.1.31" evidence="1"/>
<dbReference type="EMBL" id="CP000764">
    <property type="protein sequence ID" value="ABS24108.1"/>
    <property type="molecule type" value="Genomic_DNA"/>
</dbReference>
<dbReference type="SMR" id="A7GVF0"/>
<dbReference type="STRING" id="315749.Bcer98_3924"/>
<dbReference type="GeneID" id="33899156"/>
<dbReference type="KEGG" id="bcy:Bcer98_3924"/>
<dbReference type="eggNOG" id="COG1897">
    <property type="taxonomic scope" value="Bacteria"/>
</dbReference>
<dbReference type="HOGENOM" id="CLU_057851_0_1_9"/>
<dbReference type="OrthoDB" id="9772423at2"/>
<dbReference type="UniPathway" id="UPA00051">
    <property type="reaction ID" value="UER00074"/>
</dbReference>
<dbReference type="Proteomes" id="UP000002300">
    <property type="component" value="Chromosome"/>
</dbReference>
<dbReference type="GO" id="GO:0005737">
    <property type="term" value="C:cytoplasm"/>
    <property type="evidence" value="ECO:0007669"/>
    <property type="project" value="UniProtKB-SubCell"/>
</dbReference>
<dbReference type="GO" id="GO:0004414">
    <property type="term" value="F:homoserine O-acetyltransferase activity"/>
    <property type="evidence" value="ECO:0007669"/>
    <property type="project" value="UniProtKB-EC"/>
</dbReference>
<dbReference type="GO" id="GO:0008899">
    <property type="term" value="F:homoserine O-succinyltransferase activity"/>
    <property type="evidence" value="ECO:0007669"/>
    <property type="project" value="UniProtKB-UniRule"/>
</dbReference>
<dbReference type="GO" id="GO:0019281">
    <property type="term" value="P:L-methionine biosynthetic process from homoserine via O-succinyl-L-homoserine and cystathionine"/>
    <property type="evidence" value="ECO:0007669"/>
    <property type="project" value="InterPro"/>
</dbReference>
<dbReference type="CDD" id="cd03131">
    <property type="entry name" value="GATase1_HTS"/>
    <property type="match status" value="1"/>
</dbReference>
<dbReference type="FunFam" id="3.40.50.880:FF:000004">
    <property type="entry name" value="Homoserine O-succinyltransferase"/>
    <property type="match status" value="1"/>
</dbReference>
<dbReference type="Gene3D" id="3.40.50.880">
    <property type="match status" value="1"/>
</dbReference>
<dbReference type="HAMAP" id="MF_00295">
    <property type="entry name" value="MetA_acyltransf"/>
    <property type="match status" value="1"/>
</dbReference>
<dbReference type="InterPro" id="IPR029062">
    <property type="entry name" value="Class_I_gatase-like"/>
</dbReference>
<dbReference type="InterPro" id="IPR005697">
    <property type="entry name" value="HST_MetA"/>
</dbReference>
<dbReference type="InterPro" id="IPR033752">
    <property type="entry name" value="MetA_family"/>
</dbReference>
<dbReference type="NCBIfam" id="TIGR01001">
    <property type="entry name" value="metA"/>
    <property type="match status" value="1"/>
</dbReference>
<dbReference type="PANTHER" id="PTHR20919">
    <property type="entry name" value="HOMOSERINE O-SUCCINYLTRANSFERASE"/>
    <property type="match status" value="1"/>
</dbReference>
<dbReference type="PANTHER" id="PTHR20919:SF0">
    <property type="entry name" value="HOMOSERINE O-SUCCINYLTRANSFERASE"/>
    <property type="match status" value="1"/>
</dbReference>
<dbReference type="Pfam" id="PF04204">
    <property type="entry name" value="HTS"/>
    <property type="match status" value="1"/>
</dbReference>
<dbReference type="PIRSF" id="PIRSF000450">
    <property type="entry name" value="H_ser_succinyltr"/>
    <property type="match status" value="1"/>
</dbReference>
<dbReference type="SUPFAM" id="SSF52317">
    <property type="entry name" value="Class I glutamine amidotransferase-like"/>
    <property type="match status" value="1"/>
</dbReference>
<keyword id="KW-0012">Acyltransferase</keyword>
<keyword id="KW-0028">Amino-acid biosynthesis</keyword>
<keyword id="KW-0963">Cytoplasm</keyword>
<keyword id="KW-0486">Methionine biosynthesis</keyword>
<keyword id="KW-0808">Transferase</keyword>
<accession>A7GVF0</accession>
<proteinExistence type="inferred from homology"/>